<keyword id="KW-0378">Hydrolase</keyword>
<keyword id="KW-0904">Protein phosphatase</keyword>
<organism>
    <name type="scientific">Candida albicans (strain WO-1)</name>
    <name type="common">Yeast</name>
    <dbReference type="NCBI Taxonomy" id="294748"/>
    <lineage>
        <taxon>Eukaryota</taxon>
        <taxon>Fungi</taxon>
        <taxon>Dikarya</taxon>
        <taxon>Ascomycota</taxon>
        <taxon>Saccharomycotina</taxon>
        <taxon>Pichiomycetes</taxon>
        <taxon>Debaryomycetaceae</taxon>
        <taxon>Candida/Lodderomyces clade</taxon>
        <taxon>Candida</taxon>
    </lineage>
</organism>
<sequence>MTTPLSSYSTTVTNHHPTFSFESLNSISSNNSTRNNQSNSVNSLLYFNSSGSSMVSSSSDAAPTSISTTTTSTTSMTDASANADNQQVYTITEEDSINDINRKEQNSFSIQPNQTPTMLPTSSYTLQRPPGLHEYTSSISSISSTSSNSTSAPVSPALINYSPKHSRKPNSLNLNRNMKNLSLNLHDSTNGYTSPLPKSTNSNQPRGNFIMDSPSKKSTPVNRIGNNNGNDYINATLLQTPSITQTPTMPPPLSLAQGPPSSVGSESVYKFPLISNACLNYSAGDSDSEVESISMKQAAKNTIIPPMAPPFALQSKSSPLSTPPRLHSPLGVDRGLPISMSPIQSSLNQKFNNITLQTPLNSSFSINNDEATNFNNKNNKNNNNNSTATTTITNTILSTPQNVRYNSKKFHPPEELQESTSINAYPNGPKNVLNNLIYLYSDPAQGKIDINKFDLVINVAKECDNMSLQYMNQVPNQREYVYIPWSHNSNISKDLFQITNKIDQFFTNGRKILIHCQCGVSRSACVVVAFYMKKFQLGVNEAYELLKNGDQKYIDACDRICPNMNLIFELMEFGDKLNNNEISTQQLLMNSPPTINL</sequence>
<dbReference type="EC" id="3.1.3.48"/>
<dbReference type="EMBL" id="L01038">
    <property type="protein sequence ID" value="AAC05307.1"/>
    <property type="molecule type" value="Genomic_DNA"/>
</dbReference>
<dbReference type="EMBL" id="CH672346">
    <property type="protein sequence ID" value="EEQ42230.1"/>
    <property type="molecule type" value="Genomic_DNA"/>
</dbReference>
<dbReference type="PIR" id="S43743">
    <property type="entry name" value="S43743"/>
</dbReference>
<dbReference type="SMR" id="P43078"/>
<dbReference type="PaxDb" id="5476-P43078"/>
<dbReference type="VEuPathDB" id="FungiDB:CAWG_00432"/>
<dbReference type="HOGENOM" id="CLU_032220_0_0_1"/>
<dbReference type="OMA" id="INYSPKH"/>
<dbReference type="OrthoDB" id="21427at766764"/>
<dbReference type="PHI-base" id="PHI:66"/>
<dbReference type="PHI-base" id="PHI:6828"/>
<dbReference type="Proteomes" id="UP000001429">
    <property type="component" value="Chromosome 1, Supercontig 1.1"/>
</dbReference>
<dbReference type="GO" id="GO:0005829">
    <property type="term" value="C:cytosol"/>
    <property type="evidence" value="ECO:0007669"/>
    <property type="project" value="TreeGrafter"/>
</dbReference>
<dbReference type="GO" id="GO:0005634">
    <property type="term" value="C:nucleus"/>
    <property type="evidence" value="ECO:0007669"/>
    <property type="project" value="TreeGrafter"/>
</dbReference>
<dbReference type="GO" id="GO:0033550">
    <property type="term" value="F:MAP kinase tyrosine phosphatase activity"/>
    <property type="evidence" value="ECO:0007669"/>
    <property type="project" value="TreeGrafter"/>
</dbReference>
<dbReference type="GO" id="GO:0017017">
    <property type="term" value="F:MAP kinase tyrosine/serine/threonine phosphatase activity"/>
    <property type="evidence" value="ECO:0007669"/>
    <property type="project" value="TreeGrafter"/>
</dbReference>
<dbReference type="GO" id="GO:0008330">
    <property type="term" value="F:protein tyrosine/threonine phosphatase activity"/>
    <property type="evidence" value="ECO:0007669"/>
    <property type="project" value="TreeGrafter"/>
</dbReference>
<dbReference type="GO" id="GO:0043409">
    <property type="term" value="P:negative regulation of MAPK cascade"/>
    <property type="evidence" value="ECO:0007669"/>
    <property type="project" value="TreeGrafter"/>
</dbReference>
<dbReference type="CDD" id="cd14521">
    <property type="entry name" value="DSP_fungal_SDP1-like"/>
    <property type="match status" value="1"/>
</dbReference>
<dbReference type="FunFam" id="3.90.190.10:FF:000094">
    <property type="entry name" value="Probable tyrosine-protein phosphatase"/>
    <property type="match status" value="1"/>
</dbReference>
<dbReference type="Gene3D" id="3.90.190.10">
    <property type="entry name" value="Protein tyrosine phosphatase superfamily"/>
    <property type="match status" value="1"/>
</dbReference>
<dbReference type="InterPro" id="IPR000340">
    <property type="entry name" value="Dual-sp_phosphatase_cat-dom"/>
</dbReference>
<dbReference type="InterPro" id="IPR029021">
    <property type="entry name" value="Prot-tyrosine_phosphatase-like"/>
</dbReference>
<dbReference type="InterPro" id="IPR016130">
    <property type="entry name" value="Tyr_Pase_AS"/>
</dbReference>
<dbReference type="InterPro" id="IPR000387">
    <property type="entry name" value="Tyr_Pase_dom"/>
</dbReference>
<dbReference type="InterPro" id="IPR020422">
    <property type="entry name" value="TYR_PHOSPHATASE_DUAL_dom"/>
</dbReference>
<dbReference type="PANTHER" id="PTHR10159">
    <property type="entry name" value="DUAL SPECIFICITY PROTEIN PHOSPHATASE"/>
    <property type="match status" value="1"/>
</dbReference>
<dbReference type="PANTHER" id="PTHR10159:SF519">
    <property type="entry name" value="DUAL SPECIFICITY PROTEIN PHOSPHATASE MPK3"/>
    <property type="match status" value="1"/>
</dbReference>
<dbReference type="Pfam" id="PF00782">
    <property type="entry name" value="DSPc"/>
    <property type="match status" value="1"/>
</dbReference>
<dbReference type="SMART" id="SM00195">
    <property type="entry name" value="DSPc"/>
    <property type="match status" value="1"/>
</dbReference>
<dbReference type="SUPFAM" id="SSF52799">
    <property type="entry name" value="(Phosphotyrosine protein) phosphatases II"/>
    <property type="match status" value="1"/>
</dbReference>
<dbReference type="PROSITE" id="PS00383">
    <property type="entry name" value="TYR_PHOSPHATASE_1"/>
    <property type="match status" value="1"/>
</dbReference>
<dbReference type="PROSITE" id="PS50056">
    <property type="entry name" value="TYR_PHOSPHATASE_2"/>
    <property type="match status" value="1"/>
</dbReference>
<dbReference type="PROSITE" id="PS50054">
    <property type="entry name" value="TYR_PHOSPHATASE_DUAL"/>
    <property type="match status" value="1"/>
</dbReference>
<feature type="chain" id="PRO_0000094918" description="Probable tyrosine-protein phosphatase">
    <location>
        <begin position="1"/>
        <end position="597"/>
    </location>
</feature>
<feature type="domain" description="Tyrosine-protein phosphatase" evidence="1">
    <location>
        <begin position="428"/>
        <end position="579"/>
    </location>
</feature>
<feature type="region of interest" description="Disordered" evidence="3">
    <location>
        <begin position="55"/>
        <end position="89"/>
    </location>
</feature>
<feature type="region of interest" description="Disordered" evidence="3">
    <location>
        <begin position="107"/>
        <end position="172"/>
    </location>
</feature>
<feature type="region of interest" description="Disordered" evidence="3">
    <location>
        <begin position="188"/>
        <end position="228"/>
    </location>
</feature>
<feature type="compositionally biased region" description="Low complexity" evidence="3">
    <location>
        <begin position="55"/>
        <end position="81"/>
    </location>
</feature>
<feature type="compositionally biased region" description="Polar residues" evidence="3">
    <location>
        <begin position="107"/>
        <end position="126"/>
    </location>
</feature>
<feature type="compositionally biased region" description="Low complexity" evidence="3">
    <location>
        <begin position="136"/>
        <end position="151"/>
    </location>
</feature>
<feature type="compositionally biased region" description="Polar residues" evidence="3">
    <location>
        <begin position="188"/>
        <end position="206"/>
    </location>
</feature>
<feature type="compositionally biased region" description="Polar residues" evidence="3">
    <location>
        <begin position="216"/>
        <end position="228"/>
    </location>
</feature>
<feature type="active site" description="Phosphocysteine intermediate" evidence="1">
    <location>
        <position position="516"/>
    </location>
</feature>
<feature type="sequence conflict" description="In Ref. 1; AAC05307." evidence="4" ref="1">
    <original>Q</original>
    <variation>K</variation>
    <location>
        <position position="504"/>
    </location>
</feature>
<proteinExistence type="inferred from homology"/>
<gene>
    <name type="primary">CPP1</name>
    <name type="ORF">CAWG_00432</name>
</gene>
<comment type="catalytic activity">
    <reaction evidence="2">
        <text>O-phospho-L-tyrosyl-[protein] + H2O = L-tyrosyl-[protein] + phosphate</text>
        <dbReference type="Rhea" id="RHEA:10684"/>
        <dbReference type="Rhea" id="RHEA-COMP:10136"/>
        <dbReference type="Rhea" id="RHEA-COMP:20101"/>
        <dbReference type="ChEBI" id="CHEBI:15377"/>
        <dbReference type="ChEBI" id="CHEBI:43474"/>
        <dbReference type="ChEBI" id="CHEBI:46858"/>
        <dbReference type="ChEBI" id="CHEBI:61978"/>
        <dbReference type="EC" id="3.1.3.48"/>
    </reaction>
</comment>
<comment type="similarity">
    <text evidence="4">Belongs to the protein-tyrosine phosphatase family. Non-receptor class dual specificity subfamily.</text>
</comment>
<evidence type="ECO:0000255" key="1">
    <source>
        <dbReference type="PROSITE-ProRule" id="PRU00160"/>
    </source>
</evidence>
<evidence type="ECO:0000255" key="2">
    <source>
        <dbReference type="PROSITE-ProRule" id="PRU10044"/>
    </source>
</evidence>
<evidence type="ECO:0000256" key="3">
    <source>
        <dbReference type="SAM" id="MobiDB-lite"/>
    </source>
</evidence>
<evidence type="ECO:0000305" key="4"/>
<accession>P43078</accession>
<accession>C4YD44</accession>
<protein>
    <recommendedName>
        <fullName>Probable tyrosine-protein phosphatase</fullName>
        <ecNumber>3.1.3.48</ecNumber>
    </recommendedName>
</protein>
<reference key="1">
    <citation type="submission" date="1992-08" db="EMBL/GenBank/DDBJ databases">
        <authorList>
            <person name="Csank C."/>
            <person name="Dignard D."/>
            <person name="Thomas D.Y."/>
            <person name="Whiteway M."/>
        </authorList>
    </citation>
    <scope>NUCLEOTIDE SEQUENCE [GENOMIC DNA]</scope>
    <source>
        <strain>WO-1</strain>
    </source>
</reference>
<reference key="2">
    <citation type="journal article" date="2009" name="Nature">
        <title>Evolution of pathogenicity and sexual reproduction in eight Candida genomes.</title>
        <authorList>
            <person name="Butler G."/>
            <person name="Rasmussen M.D."/>
            <person name="Lin M.F."/>
            <person name="Santos M.A.S."/>
            <person name="Sakthikumar S."/>
            <person name="Munro C.A."/>
            <person name="Rheinbay E."/>
            <person name="Grabherr M."/>
            <person name="Forche A."/>
            <person name="Reedy J.L."/>
            <person name="Agrafioti I."/>
            <person name="Arnaud M.B."/>
            <person name="Bates S."/>
            <person name="Brown A.J.P."/>
            <person name="Brunke S."/>
            <person name="Costanzo M.C."/>
            <person name="Fitzpatrick D.A."/>
            <person name="de Groot P.W.J."/>
            <person name="Harris D."/>
            <person name="Hoyer L.L."/>
            <person name="Hube B."/>
            <person name="Klis F.M."/>
            <person name="Kodira C."/>
            <person name="Lennard N."/>
            <person name="Logue M.E."/>
            <person name="Martin R."/>
            <person name="Neiman A.M."/>
            <person name="Nikolaou E."/>
            <person name="Quail M.A."/>
            <person name="Quinn J."/>
            <person name="Santos M.C."/>
            <person name="Schmitzberger F.F."/>
            <person name="Sherlock G."/>
            <person name="Shah P."/>
            <person name="Silverstein K.A.T."/>
            <person name="Skrzypek M.S."/>
            <person name="Soll D."/>
            <person name="Staggs R."/>
            <person name="Stansfield I."/>
            <person name="Stumpf M.P.H."/>
            <person name="Sudbery P.E."/>
            <person name="Srikantha T."/>
            <person name="Zeng Q."/>
            <person name="Berman J."/>
            <person name="Berriman M."/>
            <person name="Heitman J."/>
            <person name="Gow N.A.R."/>
            <person name="Lorenz M.C."/>
            <person name="Birren B.W."/>
            <person name="Kellis M."/>
            <person name="Cuomo C.A."/>
        </authorList>
    </citation>
    <scope>NUCLEOTIDE SEQUENCE [LARGE SCALE GENOMIC DNA]</scope>
    <source>
        <strain>WO-1</strain>
    </source>
</reference>
<name>PTPX_CANAW</name>